<sequence>MTEKKPMIQALQAVRGMNDILPDEAEAWEHFEDIVRDWLRSYGYRPIRMPIVEPTPLFKRAIGEVTDIVEKEMYSFEDALNGEQLTLRPEGTASCVRAAIQHKMLSAGAQRLYYHGPMFRHERPQKGRYRQFHQIGVEALGFDGPDIDAEHILMCARLWDDFGLEDVRLELNSLGSSDERARHRAELVAYLERHRERLDDDGRRRLHTNPLRILDTKNPELQDLVDNAPKLLDFLGEDSLKHFNGVQVLLKDAGVPYRINHRLVRGLDYYNRTVFEWVTTRLGAQGTVCAGGRYDGLVEQLGGRPAPAAGFAMGIERLLALWRESGGEAEPAQPDVYVVHLGEQAQRLAFRAAEALRSHGFAVLMHCGGGSFKSQMKKADASGAPVAVVIGDDEAATGEVGLKPLRGPGGQQRVALDGLANAVAECLFTENEEEDGSL</sequence>
<accession>Q5P7B4</accession>
<dbReference type="EC" id="6.1.1.21" evidence="1"/>
<dbReference type="EMBL" id="CR555306">
    <property type="protein sequence ID" value="CAI06797.1"/>
    <property type="molecule type" value="Genomic_DNA"/>
</dbReference>
<dbReference type="SMR" id="Q5P7B4"/>
<dbReference type="STRING" id="76114.ebA1260"/>
<dbReference type="KEGG" id="eba:ebA1260"/>
<dbReference type="eggNOG" id="COG0124">
    <property type="taxonomic scope" value="Bacteria"/>
</dbReference>
<dbReference type="HOGENOM" id="CLU_025113_1_1_4"/>
<dbReference type="Proteomes" id="UP000006552">
    <property type="component" value="Chromosome"/>
</dbReference>
<dbReference type="GO" id="GO:0005737">
    <property type="term" value="C:cytoplasm"/>
    <property type="evidence" value="ECO:0007669"/>
    <property type="project" value="UniProtKB-SubCell"/>
</dbReference>
<dbReference type="GO" id="GO:0005524">
    <property type="term" value="F:ATP binding"/>
    <property type="evidence" value="ECO:0007669"/>
    <property type="project" value="UniProtKB-UniRule"/>
</dbReference>
<dbReference type="GO" id="GO:0004821">
    <property type="term" value="F:histidine-tRNA ligase activity"/>
    <property type="evidence" value="ECO:0007669"/>
    <property type="project" value="UniProtKB-UniRule"/>
</dbReference>
<dbReference type="GO" id="GO:0006427">
    <property type="term" value="P:histidyl-tRNA aminoacylation"/>
    <property type="evidence" value="ECO:0007669"/>
    <property type="project" value="UniProtKB-UniRule"/>
</dbReference>
<dbReference type="CDD" id="cd00773">
    <property type="entry name" value="HisRS-like_core"/>
    <property type="match status" value="1"/>
</dbReference>
<dbReference type="CDD" id="cd00859">
    <property type="entry name" value="HisRS_anticodon"/>
    <property type="match status" value="1"/>
</dbReference>
<dbReference type="FunFam" id="3.30.930.10:FF:000005">
    <property type="entry name" value="Histidine--tRNA ligase"/>
    <property type="match status" value="1"/>
</dbReference>
<dbReference type="Gene3D" id="3.40.50.800">
    <property type="entry name" value="Anticodon-binding domain"/>
    <property type="match status" value="1"/>
</dbReference>
<dbReference type="Gene3D" id="3.30.930.10">
    <property type="entry name" value="Bira Bifunctional Protein, Domain 2"/>
    <property type="match status" value="1"/>
</dbReference>
<dbReference type="HAMAP" id="MF_00127">
    <property type="entry name" value="His_tRNA_synth"/>
    <property type="match status" value="1"/>
</dbReference>
<dbReference type="InterPro" id="IPR006195">
    <property type="entry name" value="aa-tRNA-synth_II"/>
</dbReference>
<dbReference type="InterPro" id="IPR045864">
    <property type="entry name" value="aa-tRNA-synth_II/BPL/LPL"/>
</dbReference>
<dbReference type="InterPro" id="IPR004154">
    <property type="entry name" value="Anticodon-bd"/>
</dbReference>
<dbReference type="InterPro" id="IPR036621">
    <property type="entry name" value="Anticodon-bd_dom_sf"/>
</dbReference>
<dbReference type="InterPro" id="IPR015807">
    <property type="entry name" value="His-tRNA-ligase"/>
</dbReference>
<dbReference type="InterPro" id="IPR041715">
    <property type="entry name" value="HisRS-like_core"/>
</dbReference>
<dbReference type="InterPro" id="IPR004516">
    <property type="entry name" value="HisRS/HisZ"/>
</dbReference>
<dbReference type="InterPro" id="IPR033656">
    <property type="entry name" value="HisRS_anticodon"/>
</dbReference>
<dbReference type="NCBIfam" id="TIGR00442">
    <property type="entry name" value="hisS"/>
    <property type="match status" value="1"/>
</dbReference>
<dbReference type="PANTHER" id="PTHR43707:SF1">
    <property type="entry name" value="HISTIDINE--TRNA LIGASE, MITOCHONDRIAL-RELATED"/>
    <property type="match status" value="1"/>
</dbReference>
<dbReference type="PANTHER" id="PTHR43707">
    <property type="entry name" value="HISTIDYL-TRNA SYNTHETASE"/>
    <property type="match status" value="1"/>
</dbReference>
<dbReference type="Pfam" id="PF03129">
    <property type="entry name" value="HGTP_anticodon"/>
    <property type="match status" value="1"/>
</dbReference>
<dbReference type="Pfam" id="PF13393">
    <property type="entry name" value="tRNA-synt_His"/>
    <property type="match status" value="1"/>
</dbReference>
<dbReference type="PIRSF" id="PIRSF001549">
    <property type="entry name" value="His-tRNA_synth"/>
    <property type="match status" value="1"/>
</dbReference>
<dbReference type="SUPFAM" id="SSF52954">
    <property type="entry name" value="Class II aaRS ABD-related"/>
    <property type="match status" value="1"/>
</dbReference>
<dbReference type="SUPFAM" id="SSF55681">
    <property type="entry name" value="Class II aaRS and biotin synthetases"/>
    <property type="match status" value="1"/>
</dbReference>
<dbReference type="PROSITE" id="PS50862">
    <property type="entry name" value="AA_TRNA_LIGASE_II"/>
    <property type="match status" value="1"/>
</dbReference>
<protein>
    <recommendedName>
        <fullName evidence="1">Histidine--tRNA ligase</fullName>
        <ecNumber evidence="1">6.1.1.21</ecNumber>
    </recommendedName>
    <alternativeName>
        <fullName evidence="1">Histidyl-tRNA synthetase</fullName>
        <shortName evidence="1">HisRS</shortName>
    </alternativeName>
</protein>
<organism>
    <name type="scientific">Aromatoleum aromaticum (strain DSM 19018 / LMG 30748 / EbN1)</name>
    <name type="common">Azoarcus sp. (strain EbN1)</name>
    <dbReference type="NCBI Taxonomy" id="76114"/>
    <lineage>
        <taxon>Bacteria</taxon>
        <taxon>Pseudomonadati</taxon>
        <taxon>Pseudomonadota</taxon>
        <taxon>Betaproteobacteria</taxon>
        <taxon>Rhodocyclales</taxon>
        <taxon>Rhodocyclaceae</taxon>
        <taxon>Aromatoleum</taxon>
    </lineage>
</organism>
<comment type="catalytic activity">
    <reaction evidence="1">
        <text>tRNA(His) + L-histidine + ATP = L-histidyl-tRNA(His) + AMP + diphosphate + H(+)</text>
        <dbReference type="Rhea" id="RHEA:17313"/>
        <dbReference type="Rhea" id="RHEA-COMP:9665"/>
        <dbReference type="Rhea" id="RHEA-COMP:9689"/>
        <dbReference type="ChEBI" id="CHEBI:15378"/>
        <dbReference type="ChEBI" id="CHEBI:30616"/>
        <dbReference type="ChEBI" id="CHEBI:33019"/>
        <dbReference type="ChEBI" id="CHEBI:57595"/>
        <dbReference type="ChEBI" id="CHEBI:78442"/>
        <dbReference type="ChEBI" id="CHEBI:78527"/>
        <dbReference type="ChEBI" id="CHEBI:456215"/>
        <dbReference type="EC" id="6.1.1.21"/>
    </reaction>
</comment>
<comment type="subunit">
    <text evidence="1">Homodimer.</text>
</comment>
<comment type="subcellular location">
    <subcellularLocation>
        <location evidence="1">Cytoplasm</location>
    </subcellularLocation>
</comment>
<comment type="similarity">
    <text evidence="1">Belongs to the class-II aminoacyl-tRNA synthetase family.</text>
</comment>
<evidence type="ECO:0000255" key="1">
    <source>
        <dbReference type="HAMAP-Rule" id="MF_00127"/>
    </source>
</evidence>
<proteinExistence type="inferred from homology"/>
<keyword id="KW-0030">Aminoacyl-tRNA synthetase</keyword>
<keyword id="KW-0067">ATP-binding</keyword>
<keyword id="KW-0963">Cytoplasm</keyword>
<keyword id="KW-0436">Ligase</keyword>
<keyword id="KW-0547">Nucleotide-binding</keyword>
<keyword id="KW-0648">Protein biosynthesis</keyword>
<keyword id="KW-1185">Reference proteome</keyword>
<name>SYH_AROAE</name>
<feature type="chain" id="PRO_0000136092" description="Histidine--tRNA ligase">
    <location>
        <begin position="1"/>
        <end position="438"/>
    </location>
</feature>
<gene>
    <name evidence="1" type="primary">hisS</name>
    <name type="ordered locus">AZOSEA06740</name>
    <name type="ORF">ebA1260</name>
</gene>
<reference key="1">
    <citation type="journal article" date="2005" name="Arch. Microbiol.">
        <title>The genome sequence of an anaerobic aromatic-degrading denitrifying bacterium, strain EbN1.</title>
        <authorList>
            <person name="Rabus R."/>
            <person name="Kube M."/>
            <person name="Heider J."/>
            <person name="Beck A."/>
            <person name="Heitmann K."/>
            <person name="Widdel F."/>
            <person name="Reinhardt R."/>
        </authorList>
    </citation>
    <scope>NUCLEOTIDE SEQUENCE [LARGE SCALE GENOMIC DNA]</scope>
    <source>
        <strain>DSM 19018 / LMG 30748 / EbN1</strain>
    </source>
</reference>